<protein>
    <recommendedName>
        <fullName evidence="1">DNA-directed RNA polymerase subunit beta</fullName>
        <shortName evidence="1">RNAP subunit beta</shortName>
        <ecNumber evidence="1">2.7.7.6</ecNumber>
    </recommendedName>
    <alternativeName>
        <fullName evidence="1">RNA polymerase subunit beta</fullName>
    </alternativeName>
    <alternativeName>
        <fullName evidence="1">Transcriptase subunit beta</fullName>
    </alternativeName>
</protein>
<evidence type="ECO:0000255" key="1">
    <source>
        <dbReference type="HAMAP-Rule" id="MF_01321"/>
    </source>
</evidence>
<evidence type="ECO:0000305" key="2"/>
<reference key="1">
    <citation type="submission" date="2007-11" db="EMBL/GenBank/DDBJ databases">
        <authorList>
            <consortium name="The Salmonella enterica serovar Arizonae Genome Sequencing Project"/>
            <person name="McClelland M."/>
            <person name="Sanderson E.K."/>
            <person name="Porwollik S."/>
            <person name="Spieth J."/>
            <person name="Clifton W.S."/>
            <person name="Fulton R."/>
            <person name="Chunyan W."/>
            <person name="Wollam A."/>
            <person name="Shah N."/>
            <person name="Pepin K."/>
            <person name="Bhonagiri V."/>
            <person name="Nash W."/>
            <person name="Johnson M."/>
            <person name="Thiruvilangam P."/>
            <person name="Wilson R."/>
        </authorList>
    </citation>
    <scope>NUCLEOTIDE SEQUENCE [LARGE SCALE GENOMIC DNA]</scope>
    <source>
        <strain>ATCC BAA-731 / CDC346-86 / RSK2980</strain>
    </source>
</reference>
<dbReference type="EC" id="2.7.7.6" evidence="1"/>
<dbReference type="EMBL" id="CP000880">
    <property type="protein sequence ID" value="ABX23334.1"/>
    <property type="status" value="ALT_INIT"/>
    <property type="molecule type" value="Genomic_DNA"/>
</dbReference>
<dbReference type="SMR" id="A9MHF1"/>
<dbReference type="STRING" id="41514.SARI_03509"/>
<dbReference type="KEGG" id="ses:SARI_03509"/>
<dbReference type="HOGENOM" id="CLU_000524_4_0_6"/>
<dbReference type="Proteomes" id="UP000002084">
    <property type="component" value="Chromosome"/>
</dbReference>
<dbReference type="GO" id="GO:0000428">
    <property type="term" value="C:DNA-directed RNA polymerase complex"/>
    <property type="evidence" value="ECO:0007669"/>
    <property type="project" value="UniProtKB-KW"/>
</dbReference>
<dbReference type="GO" id="GO:0003677">
    <property type="term" value="F:DNA binding"/>
    <property type="evidence" value="ECO:0007669"/>
    <property type="project" value="UniProtKB-UniRule"/>
</dbReference>
<dbReference type="GO" id="GO:0003899">
    <property type="term" value="F:DNA-directed RNA polymerase activity"/>
    <property type="evidence" value="ECO:0007669"/>
    <property type="project" value="UniProtKB-UniRule"/>
</dbReference>
<dbReference type="GO" id="GO:0032549">
    <property type="term" value="F:ribonucleoside binding"/>
    <property type="evidence" value="ECO:0007669"/>
    <property type="project" value="InterPro"/>
</dbReference>
<dbReference type="GO" id="GO:0006351">
    <property type="term" value="P:DNA-templated transcription"/>
    <property type="evidence" value="ECO:0007669"/>
    <property type="project" value="UniProtKB-UniRule"/>
</dbReference>
<dbReference type="CDD" id="cd00653">
    <property type="entry name" value="RNA_pol_B_RPB2"/>
    <property type="match status" value="1"/>
</dbReference>
<dbReference type="FunFam" id="2.30.150.10:FF:000001">
    <property type="entry name" value="DNA-directed RNA polymerase subunit beta"/>
    <property type="match status" value="1"/>
</dbReference>
<dbReference type="FunFam" id="2.40.270.10:FF:000003">
    <property type="entry name" value="DNA-directed RNA polymerase subunit beta"/>
    <property type="match status" value="1"/>
</dbReference>
<dbReference type="FunFam" id="2.40.270.10:FF:000004">
    <property type="entry name" value="DNA-directed RNA polymerase subunit beta"/>
    <property type="match status" value="1"/>
</dbReference>
<dbReference type="FunFam" id="2.40.50.100:FF:000006">
    <property type="entry name" value="DNA-directed RNA polymerase subunit beta"/>
    <property type="match status" value="1"/>
</dbReference>
<dbReference type="FunFam" id="2.40.50.150:FF:000001">
    <property type="entry name" value="DNA-directed RNA polymerase subunit beta"/>
    <property type="match status" value="1"/>
</dbReference>
<dbReference type="FunFam" id="3.90.1100.10:FF:000002">
    <property type="entry name" value="DNA-directed RNA polymerase subunit beta"/>
    <property type="match status" value="1"/>
</dbReference>
<dbReference type="FunFam" id="3.90.1110.10:FF:000001">
    <property type="entry name" value="DNA-directed RNA polymerase subunit beta"/>
    <property type="match status" value="1"/>
</dbReference>
<dbReference type="FunFam" id="3.90.1110.10:FF:000004">
    <property type="entry name" value="DNA-directed RNA polymerase subunit beta"/>
    <property type="match status" value="1"/>
</dbReference>
<dbReference type="FunFam" id="3.90.1800.10:FF:000001">
    <property type="entry name" value="DNA-directed RNA polymerase subunit beta"/>
    <property type="match status" value="1"/>
</dbReference>
<dbReference type="Gene3D" id="2.40.50.100">
    <property type="match status" value="1"/>
</dbReference>
<dbReference type="Gene3D" id="2.40.50.150">
    <property type="match status" value="1"/>
</dbReference>
<dbReference type="Gene3D" id="3.90.1100.10">
    <property type="match status" value="2"/>
</dbReference>
<dbReference type="Gene3D" id="6.10.140.1670">
    <property type="match status" value="1"/>
</dbReference>
<dbReference type="Gene3D" id="2.30.150.10">
    <property type="entry name" value="DNA-directed RNA polymerase, beta subunit, external 1 domain"/>
    <property type="match status" value="1"/>
</dbReference>
<dbReference type="Gene3D" id="2.40.270.10">
    <property type="entry name" value="DNA-directed RNA polymerase, subunit 2, domain 6"/>
    <property type="match status" value="1"/>
</dbReference>
<dbReference type="Gene3D" id="3.90.1800.10">
    <property type="entry name" value="RNA polymerase alpha subunit dimerisation domain"/>
    <property type="match status" value="1"/>
</dbReference>
<dbReference type="Gene3D" id="3.90.1110.10">
    <property type="entry name" value="RNA polymerase Rpb2, domain 2"/>
    <property type="match status" value="1"/>
</dbReference>
<dbReference type="HAMAP" id="MF_01321">
    <property type="entry name" value="RNApol_bact_RpoB"/>
    <property type="match status" value="1"/>
</dbReference>
<dbReference type="InterPro" id="IPR042107">
    <property type="entry name" value="DNA-dir_RNA_pol_bsu_ext_1_sf"/>
</dbReference>
<dbReference type="InterPro" id="IPR019462">
    <property type="entry name" value="DNA-dir_RNA_pol_bsu_external_1"/>
</dbReference>
<dbReference type="InterPro" id="IPR015712">
    <property type="entry name" value="DNA-dir_RNA_pol_su2"/>
</dbReference>
<dbReference type="InterPro" id="IPR007120">
    <property type="entry name" value="DNA-dir_RNAP_su2_dom"/>
</dbReference>
<dbReference type="InterPro" id="IPR037033">
    <property type="entry name" value="DNA-dir_RNAP_su2_hyb_sf"/>
</dbReference>
<dbReference type="InterPro" id="IPR010243">
    <property type="entry name" value="RNA_pol_bsu_bac"/>
</dbReference>
<dbReference type="InterPro" id="IPR007121">
    <property type="entry name" value="RNA_pol_bsu_CS"/>
</dbReference>
<dbReference type="InterPro" id="IPR007644">
    <property type="entry name" value="RNA_pol_bsu_protrusion"/>
</dbReference>
<dbReference type="InterPro" id="IPR007642">
    <property type="entry name" value="RNA_pol_Rpb2_2"/>
</dbReference>
<dbReference type="InterPro" id="IPR037034">
    <property type="entry name" value="RNA_pol_Rpb2_2_sf"/>
</dbReference>
<dbReference type="InterPro" id="IPR007645">
    <property type="entry name" value="RNA_pol_Rpb2_3"/>
</dbReference>
<dbReference type="InterPro" id="IPR007641">
    <property type="entry name" value="RNA_pol_Rpb2_7"/>
</dbReference>
<dbReference type="InterPro" id="IPR014724">
    <property type="entry name" value="RNA_pol_RPB2_OB-fold"/>
</dbReference>
<dbReference type="NCBIfam" id="NF001616">
    <property type="entry name" value="PRK00405.1"/>
    <property type="match status" value="1"/>
</dbReference>
<dbReference type="NCBIfam" id="TIGR02013">
    <property type="entry name" value="rpoB"/>
    <property type="match status" value="1"/>
</dbReference>
<dbReference type="PANTHER" id="PTHR20856">
    <property type="entry name" value="DNA-DIRECTED RNA POLYMERASE I SUBUNIT 2"/>
    <property type="match status" value="1"/>
</dbReference>
<dbReference type="Pfam" id="PF04563">
    <property type="entry name" value="RNA_pol_Rpb2_1"/>
    <property type="match status" value="1"/>
</dbReference>
<dbReference type="Pfam" id="PF04561">
    <property type="entry name" value="RNA_pol_Rpb2_2"/>
    <property type="match status" value="2"/>
</dbReference>
<dbReference type="Pfam" id="PF04565">
    <property type="entry name" value="RNA_pol_Rpb2_3"/>
    <property type="match status" value="1"/>
</dbReference>
<dbReference type="Pfam" id="PF10385">
    <property type="entry name" value="RNA_pol_Rpb2_45"/>
    <property type="match status" value="1"/>
</dbReference>
<dbReference type="Pfam" id="PF00562">
    <property type="entry name" value="RNA_pol_Rpb2_6"/>
    <property type="match status" value="1"/>
</dbReference>
<dbReference type="Pfam" id="PF04560">
    <property type="entry name" value="RNA_pol_Rpb2_7"/>
    <property type="match status" value="1"/>
</dbReference>
<dbReference type="SUPFAM" id="SSF64484">
    <property type="entry name" value="beta and beta-prime subunits of DNA dependent RNA-polymerase"/>
    <property type="match status" value="1"/>
</dbReference>
<dbReference type="PROSITE" id="PS01166">
    <property type="entry name" value="RNA_POL_BETA"/>
    <property type="match status" value="1"/>
</dbReference>
<feature type="chain" id="PRO_0000329187" description="DNA-directed RNA polymerase subunit beta">
    <location>
        <begin position="1"/>
        <end position="1342"/>
    </location>
</feature>
<name>RPOB_SALAR</name>
<gene>
    <name evidence="1" type="primary">rpoB</name>
    <name type="ordered locus">SARI_03509</name>
</gene>
<sequence>MVYSYTEKKRIRKDFGKRPQVLDVPYLLSIQLDSFQKFIEQDPEGQYGLEAAFRSVFPIQSYSGNSELQYVSYRLGEPVFDVQECQIRGVTYSAPLRVKLRLVIYEREAPEGTVKDIKEQEVYMGEIPLMTDNGTFVINGTERVIVSQLHRSPGVFFDSDKGKTHSSGKVLYNARIIPYRGSWLDFEFDPKDNLFVRIDRRRKLPATIILRALNYTTEQILDLFFEKVVFEIRDNKLQMELIPERLRGETASFDIEANGKVYVEKGRRITARHIRQLEKDDIKHIEVPVEYIAGKVVSKDYVDESTGELICAANMELSLDLLAKLSQSGHKRIETLFTNDLDHGPYISETVRVDPTNDRLSALVEIYRMMRPGEPPTREAAESLFENLFFSEDRYDLSAVGRMKFNRSLLRDEIEGSGILSKDDIIDVMKKLIDIRNGKGEVDDIDHLGNRRIRSVGEMAENQFRVGLVRVERAVKERLSLGDLDTLMPQDMINAKPISAAVKEFFGSSQLSQFMDQNNPLSEITHKRRISALGPGGLTRERAGFEVRDVHPTHYGRVCPIETPEGPNIGLINSLSVYAQTNEYGFLETPYRRVVDGVVTDEIHYLSAIEEGNYVIAQANSNLDDEGHFVEDLVTCRSKGESSLFSRDQVDYMDVSTQQVVSVGASLIPFLEHDDANRALMGANMQRQAVPTLRADKPLVGTGMERAVAVDSGVTAVAKRGGTVQYVDASRIVIKVNEDEMYPGEAGIDIYNLTKYTRSNQNTCINQMPCVSLGEPVERGDVLADGPSTDLGELALGQNMRVAFMPWNGYNFEDSILVSERVVQEDRFTTIHIQELACVSRDTKLGPEEITADIPNVGEAALSKLDESGIVYIGAEVTGGDILVGKVTPKGETQLTPEEKLLRAIFGEKASDVKDSSLRVPNGVSGTVIDVQVFTRDGVEKDKRALEIEEMQLKQAKKDLSEELQILEAGLFSRIRAVLVSGGVEAEKLDKLPRDRWLELGLTDEEKQNQLEQLAEQYDELKHEFEKKLEAKRRKITQGDDLAPGVLKIVKVYLAVKRRIQPGDKMAGRHGNKGVISKINPIEDMPYDENGTPVDIVLNPLGVPSRMNIGQILETHLGMAAKGIGDKINAMLKQQQEVAKLREFIQRAYDLGADVRQKVDLSTFSDDEVLRLAENLRKGMPIATPVFDGAKEAEIKELLKLGDLPTSGQITLFDGRTGEQFERPVTVGYMYMLKLNHLVDDKMHARSTGSYSLVTQQPLGGKAQFGGQRFGEMEVWALEAYGAAYTLQEMLTVKSDDVNGRTKMYKNIVDGNHQMEPGMPESFNVLLKEIRSLGINIELEDE</sequence>
<organism>
    <name type="scientific">Salmonella arizonae (strain ATCC BAA-731 / CDC346-86 / RSK2980)</name>
    <dbReference type="NCBI Taxonomy" id="41514"/>
    <lineage>
        <taxon>Bacteria</taxon>
        <taxon>Pseudomonadati</taxon>
        <taxon>Pseudomonadota</taxon>
        <taxon>Gammaproteobacteria</taxon>
        <taxon>Enterobacterales</taxon>
        <taxon>Enterobacteriaceae</taxon>
        <taxon>Salmonella</taxon>
    </lineage>
</organism>
<comment type="function">
    <text evidence="1">DNA-dependent RNA polymerase catalyzes the transcription of DNA into RNA using the four ribonucleoside triphosphates as substrates.</text>
</comment>
<comment type="catalytic activity">
    <reaction evidence="1">
        <text>RNA(n) + a ribonucleoside 5'-triphosphate = RNA(n+1) + diphosphate</text>
        <dbReference type="Rhea" id="RHEA:21248"/>
        <dbReference type="Rhea" id="RHEA-COMP:14527"/>
        <dbReference type="Rhea" id="RHEA-COMP:17342"/>
        <dbReference type="ChEBI" id="CHEBI:33019"/>
        <dbReference type="ChEBI" id="CHEBI:61557"/>
        <dbReference type="ChEBI" id="CHEBI:140395"/>
        <dbReference type="EC" id="2.7.7.6"/>
    </reaction>
</comment>
<comment type="subunit">
    <text evidence="1">The RNAP catalytic core consists of 2 alpha, 1 beta, 1 beta' and 1 omega subunit. When a sigma factor is associated with the core the holoenzyme is formed, which can initiate transcription.</text>
</comment>
<comment type="similarity">
    <text evidence="1">Belongs to the RNA polymerase beta chain family.</text>
</comment>
<comment type="sequence caution" evidence="2">
    <conflict type="erroneous initiation">
        <sequence resource="EMBL-CDS" id="ABX23334"/>
    </conflict>
</comment>
<accession>A9MHF1</accession>
<keyword id="KW-0240">DNA-directed RNA polymerase</keyword>
<keyword id="KW-0548">Nucleotidyltransferase</keyword>
<keyword id="KW-1185">Reference proteome</keyword>
<keyword id="KW-0804">Transcription</keyword>
<keyword id="KW-0808">Transferase</keyword>
<proteinExistence type="inferred from homology"/>